<feature type="chain" id="PRO_0000187830" description="Peptidyl-tRNA hydrolase">
    <location>
        <begin position="1"/>
        <end position="189"/>
    </location>
</feature>
<feature type="active site" description="Proton acceptor" evidence="1">
    <location>
        <position position="20"/>
    </location>
</feature>
<feature type="binding site" evidence="1">
    <location>
        <position position="15"/>
    </location>
    <ligand>
        <name>tRNA</name>
        <dbReference type="ChEBI" id="CHEBI:17843"/>
    </ligand>
</feature>
<feature type="binding site" evidence="1">
    <location>
        <position position="66"/>
    </location>
    <ligand>
        <name>tRNA</name>
        <dbReference type="ChEBI" id="CHEBI:17843"/>
    </ligand>
</feature>
<feature type="binding site" evidence="1">
    <location>
        <position position="68"/>
    </location>
    <ligand>
        <name>tRNA</name>
        <dbReference type="ChEBI" id="CHEBI:17843"/>
    </ligand>
</feature>
<feature type="binding site" evidence="1">
    <location>
        <position position="114"/>
    </location>
    <ligand>
        <name>tRNA</name>
        <dbReference type="ChEBI" id="CHEBI:17843"/>
    </ligand>
</feature>
<feature type="site" description="Discriminates between blocked and unblocked aminoacyl-tRNA" evidence="1">
    <location>
        <position position="10"/>
    </location>
</feature>
<feature type="site" description="Stabilizes the basic form of H active site to accept a proton" evidence="1">
    <location>
        <position position="93"/>
    </location>
</feature>
<evidence type="ECO:0000255" key="1">
    <source>
        <dbReference type="HAMAP-Rule" id="MF_00083"/>
    </source>
</evidence>
<gene>
    <name evidence="1" type="primary">pth</name>
    <name type="ordered locus">SPy_0007</name>
    <name type="ordered locus">M5005_Spy0005</name>
</gene>
<reference key="1">
    <citation type="journal article" date="2001" name="Proc. Natl. Acad. Sci. U.S.A.">
        <title>Complete genome sequence of an M1 strain of Streptococcus pyogenes.</title>
        <authorList>
            <person name="Ferretti J.J."/>
            <person name="McShan W.M."/>
            <person name="Ajdic D.J."/>
            <person name="Savic D.J."/>
            <person name="Savic G."/>
            <person name="Lyon K."/>
            <person name="Primeaux C."/>
            <person name="Sezate S."/>
            <person name="Suvorov A.N."/>
            <person name="Kenton S."/>
            <person name="Lai H.S."/>
            <person name="Lin S.P."/>
            <person name="Qian Y."/>
            <person name="Jia H.G."/>
            <person name="Najar F.Z."/>
            <person name="Ren Q."/>
            <person name="Zhu H."/>
            <person name="Song L."/>
            <person name="White J."/>
            <person name="Yuan X."/>
            <person name="Clifton S.W."/>
            <person name="Roe B.A."/>
            <person name="McLaughlin R.E."/>
        </authorList>
    </citation>
    <scope>NUCLEOTIDE SEQUENCE [LARGE SCALE GENOMIC DNA]</scope>
    <source>
        <strain>ATCC 700294 / SF370 / Serotype M1</strain>
    </source>
</reference>
<reference key="2">
    <citation type="journal article" date="2005" name="J. Infect. Dis.">
        <title>Evolutionary origin and emergence of a highly successful clone of serotype M1 group A Streptococcus involved multiple horizontal gene transfer events.</title>
        <authorList>
            <person name="Sumby P."/>
            <person name="Porcella S.F."/>
            <person name="Madrigal A.G."/>
            <person name="Barbian K.D."/>
            <person name="Virtaneva K."/>
            <person name="Ricklefs S.M."/>
            <person name="Sturdevant D.E."/>
            <person name="Graham M.R."/>
            <person name="Vuopio-Varkila J."/>
            <person name="Hoe N.P."/>
            <person name="Musser J.M."/>
        </authorList>
    </citation>
    <scope>NUCLEOTIDE SEQUENCE [LARGE SCALE GENOMIC DNA]</scope>
    <source>
        <strain>ATCC BAA-947 / MGAS5005 / Serotype M1</strain>
    </source>
</reference>
<dbReference type="EC" id="3.1.1.29" evidence="1"/>
<dbReference type="EMBL" id="AE004092">
    <property type="protein sequence ID" value="AAK33150.1"/>
    <property type="molecule type" value="Genomic_DNA"/>
</dbReference>
<dbReference type="EMBL" id="CP000017">
    <property type="protein sequence ID" value="AAZ50624.1"/>
    <property type="molecule type" value="Genomic_DNA"/>
</dbReference>
<dbReference type="RefSeq" id="NP_268428.1">
    <property type="nucleotide sequence ID" value="NC_002737.2"/>
</dbReference>
<dbReference type="SMR" id="Q9A206"/>
<dbReference type="PaxDb" id="1314-HKU360_00005"/>
<dbReference type="KEGG" id="spy:SPy_0007"/>
<dbReference type="KEGG" id="spz:M5005_Spy0005"/>
<dbReference type="PATRIC" id="fig|160490.10.peg.6"/>
<dbReference type="HOGENOM" id="CLU_062456_4_1_9"/>
<dbReference type="OMA" id="PNTYMNL"/>
<dbReference type="Proteomes" id="UP000000750">
    <property type="component" value="Chromosome"/>
</dbReference>
<dbReference type="GO" id="GO:0005737">
    <property type="term" value="C:cytoplasm"/>
    <property type="evidence" value="ECO:0007669"/>
    <property type="project" value="UniProtKB-SubCell"/>
</dbReference>
<dbReference type="GO" id="GO:0004045">
    <property type="term" value="F:peptidyl-tRNA hydrolase activity"/>
    <property type="evidence" value="ECO:0007669"/>
    <property type="project" value="UniProtKB-UniRule"/>
</dbReference>
<dbReference type="GO" id="GO:0000049">
    <property type="term" value="F:tRNA binding"/>
    <property type="evidence" value="ECO:0007669"/>
    <property type="project" value="UniProtKB-UniRule"/>
</dbReference>
<dbReference type="GO" id="GO:0006515">
    <property type="term" value="P:protein quality control for misfolded or incompletely synthesized proteins"/>
    <property type="evidence" value="ECO:0007669"/>
    <property type="project" value="UniProtKB-UniRule"/>
</dbReference>
<dbReference type="GO" id="GO:0072344">
    <property type="term" value="P:rescue of stalled ribosome"/>
    <property type="evidence" value="ECO:0007669"/>
    <property type="project" value="UniProtKB-UniRule"/>
</dbReference>
<dbReference type="CDD" id="cd00462">
    <property type="entry name" value="PTH"/>
    <property type="match status" value="1"/>
</dbReference>
<dbReference type="FunFam" id="3.40.50.1470:FF:000001">
    <property type="entry name" value="Peptidyl-tRNA hydrolase"/>
    <property type="match status" value="1"/>
</dbReference>
<dbReference type="Gene3D" id="3.40.50.1470">
    <property type="entry name" value="Peptidyl-tRNA hydrolase"/>
    <property type="match status" value="1"/>
</dbReference>
<dbReference type="HAMAP" id="MF_00083">
    <property type="entry name" value="Pept_tRNA_hydro_bact"/>
    <property type="match status" value="1"/>
</dbReference>
<dbReference type="InterPro" id="IPR001328">
    <property type="entry name" value="Pept_tRNA_hydro"/>
</dbReference>
<dbReference type="InterPro" id="IPR018171">
    <property type="entry name" value="Pept_tRNA_hydro_CS"/>
</dbReference>
<dbReference type="InterPro" id="IPR036416">
    <property type="entry name" value="Pept_tRNA_hydro_sf"/>
</dbReference>
<dbReference type="NCBIfam" id="TIGR00447">
    <property type="entry name" value="pth"/>
    <property type="match status" value="1"/>
</dbReference>
<dbReference type="PANTHER" id="PTHR17224">
    <property type="entry name" value="PEPTIDYL-TRNA HYDROLASE"/>
    <property type="match status" value="1"/>
</dbReference>
<dbReference type="PANTHER" id="PTHR17224:SF1">
    <property type="entry name" value="PEPTIDYL-TRNA HYDROLASE"/>
    <property type="match status" value="1"/>
</dbReference>
<dbReference type="Pfam" id="PF01195">
    <property type="entry name" value="Pept_tRNA_hydro"/>
    <property type="match status" value="1"/>
</dbReference>
<dbReference type="SUPFAM" id="SSF53178">
    <property type="entry name" value="Peptidyl-tRNA hydrolase-like"/>
    <property type="match status" value="1"/>
</dbReference>
<dbReference type="PROSITE" id="PS01195">
    <property type="entry name" value="PEPT_TRNA_HYDROL_1"/>
    <property type="match status" value="1"/>
</dbReference>
<dbReference type="PROSITE" id="PS01196">
    <property type="entry name" value="PEPT_TRNA_HYDROL_2"/>
    <property type="match status" value="1"/>
</dbReference>
<name>PTH_STRP1</name>
<organism>
    <name type="scientific">Streptococcus pyogenes serotype M1</name>
    <dbReference type="NCBI Taxonomy" id="301447"/>
    <lineage>
        <taxon>Bacteria</taxon>
        <taxon>Bacillati</taxon>
        <taxon>Bacillota</taxon>
        <taxon>Bacilli</taxon>
        <taxon>Lactobacillales</taxon>
        <taxon>Streptococcaceae</taxon>
        <taxon>Streptococcus</taxon>
    </lineage>
</organism>
<protein>
    <recommendedName>
        <fullName evidence="1">Peptidyl-tRNA hydrolase</fullName>
        <shortName evidence="1">Pth</shortName>
        <ecNumber evidence="1">3.1.1.29</ecNumber>
    </recommendedName>
</protein>
<comment type="function">
    <text evidence="1">Hydrolyzes ribosome-free peptidyl-tRNAs (with 1 or more amino acids incorporated), which drop off the ribosome during protein synthesis, or as a result of ribosome stalling.</text>
</comment>
<comment type="function">
    <text evidence="1">Catalyzes the release of premature peptidyl moieties from peptidyl-tRNA molecules trapped in stalled 50S ribosomal subunits, and thus maintains levels of free tRNAs and 50S ribosomes.</text>
</comment>
<comment type="catalytic activity">
    <reaction evidence="1">
        <text>an N-acyl-L-alpha-aminoacyl-tRNA + H2O = an N-acyl-L-amino acid + a tRNA + H(+)</text>
        <dbReference type="Rhea" id="RHEA:54448"/>
        <dbReference type="Rhea" id="RHEA-COMP:10123"/>
        <dbReference type="Rhea" id="RHEA-COMP:13883"/>
        <dbReference type="ChEBI" id="CHEBI:15377"/>
        <dbReference type="ChEBI" id="CHEBI:15378"/>
        <dbReference type="ChEBI" id="CHEBI:59874"/>
        <dbReference type="ChEBI" id="CHEBI:78442"/>
        <dbReference type="ChEBI" id="CHEBI:138191"/>
        <dbReference type="EC" id="3.1.1.29"/>
    </reaction>
</comment>
<comment type="subunit">
    <text evidence="1">Monomer.</text>
</comment>
<comment type="subcellular location">
    <subcellularLocation>
        <location evidence="1">Cytoplasm</location>
    </subcellularLocation>
</comment>
<comment type="similarity">
    <text evidence="1">Belongs to the PTH family.</text>
</comment>
<keyword id="KW-0963">Cytoplasm</keyword>
<keyword id="KW-0378">Hydrolase</keyword>
<keyword id="KW-1185">Reference proteome</keyword>
<keyword id="KW-0694">RNA-binding</keyword>
<keyword id="KW-0820">tRNA-binding</keyword>
<sequence>MVKMIVGLGNPGSKYEKTKHNIGFMAIDNIVKNLDVTFTDDKNFKAQIGSTFINHEKVYFVKPTTFMNNSGIAVKALLTYYNIDITDLIVIYDDLDMEVSKLRLRSKGSAGGHNGIKSIIAHIGTQEFNRIKVGIGRPLKGMTVINHVMGQFNTEDNIAISLTLDRVVNAVKFYLQENDFEKTMQKFNG</sequence>
<proteinExistence type="inferred from homology"/>
<accession>Q9A206</accession>
<accession>Q491U4</accession>